<comment type="function">
    <text evidence="1">May mediate the reduction of outer membrane cytochrome b5.</text>
</comment>
<comment type="catalytic activity">
    <reaction>
        <text>2 Fe(III)-[cytochrome b5] + NADH = 2 Fe(II)-[cytochrome b5] + NAD(+) + H(+)</text>
        <dbReference type="Rhea" id="RHEA:46680"/>
        <dbReference type="Rhea" id="RHEA-COMP:10438"/>
        <dbReference type="Rhea" id="RHEA-COMP:10439"/>
        <dbReference type="ChEBI" id="CHEBI:15378"/>
        <dbReference type="ChEBI" id="CHEBI:29033"/>
        <dbReference type="ChEBI" id="CHEBI:29034"/>
        <dbReference type="ChEBI" id="CHEBI:57540"/>
        <dbReference type="ChEBI" id="CHEBI:57945"/>
        <dbReference type="EC" id="1.6.2.2"/>
    </reaction>
</comment>
<comment type="cofactor">
    <cofactor evidence="1">
        <name>FAD</name>
        <dbReference type="ChEBI" id="CHEBI:57692"/>
    </cofactor>
</comment>
<comment type="subcellular location">
    <subcellularLocation>
        <location evidence="1">Mitochondrion outer membrane</location>
        <topology evidence="1">Single-pass membrane protein</topology>
    </subcellularLocation>
</comment>
<comment type="similarity">
    <text evidence="4">Belongs to the flavoprotein pyridine nucleotide cytochrome reductase family.</text>
</comment>
<reference key="1">
    <citation type="journal article" date="2004" name="Nature">
        <title>Genome evolution in yeasts.</title>
        <authorList>
            <person name="Dujon B."/>
            <person name="Sherman D."/>
            <person name="Fischer G."/>
            <person name="Durrens P."/>
            <person name="Casaregola S."/>
            <person name="Lafontaine I."/>
            <person name="de Montigny J."/>
            <person name="Marck C."/>
            <person name="Neuveglise C."/>
            <person name="Talla E."/>
            <person name="Goffard N."/>
            <person name="Frangeul L."/>
            <person name="Aigle M."/>
            <person name="Anthouard V."/>
            <person name="Babour A."/>
            <person name="Barbe V."/>
            <person name="Barnay S."/>
            <person name="Blanchin S."/>
            <person name="Beckerich J.-M."/>
            <person name="Beyne E."/>
            <person name="Bleykasten C."/>
            <person name="Boisrame A."/>
            <person name="Boyer J."/>
            <person name="Cattolico L."/>
            <person name="Confanioleri F."/>
            <person name="de Daruvar A."/>
            <person name="Despons L."/>
            <person name="Fabre E."/>
            <person name="Fairhead C."/>
            <person name="Ferry-Dumazet H."/>
            <person name="Groppi A."/>
            <person name="Hantraye F."/>
            <person name="Hennequin C."/>
            <person name="Jauniaux N."/>
            <person name="Joyet P."/>
            <person name="Kachouri R."/>
            <person name="Kerrest A."/>
            <person name="Koszul R."/>
            <person name="Lemaire M."/>
            <person name="Lesur I."/>
            <person name="Ma L."/>
            <person name="Muller H."/>
            <person name="Nicaud J.-M."/>
            <person name="Nikolski M."/>
            <person name="Oztas S."/>
            <person name="Ozier-Kalogeropoulos O."/>
            <person name="Pellenz S."/>
            <person name="Potier S."/>
            <person name="Richard G.-F."/>
            <person name="Straub M.-L."/>
            <person name="Suleau A."/>
            <person name="Swennen D."/>
            <person name="Tekaia F."/>
            <person name="Wesolowski-Louvel M."/>
            <person name="Westhof E."/>
            <person name="Wirth B."/>
            <person name="Zeniou-Meyer M."/>
            <person name="Zivanovic Y."/>
            <person name="Bolotin-Fukuhara M."/>
            <person name="Thierry A."/>
            <person name="Bouchier C."/>
            <person name="Caudron B."/>
            <person name="Scarpelli C."/>
            <person name="Gaillardin C."/>
            <person name="Weissenbach J."/>
            <person name="Wincker P."/>
            <person name="Souciet J.-L."/>
        </authorList>
    </citation>
    <scope>NUCLEOTIDE SEQUENCE [LARGE SCALE GENOMIC DNA]</scope>
    <source>
        <strain>CLIB 122 / E 150</strain>
    </source>
</reference>
<organism>
    <name type="scientific">Yarrowia lipolytica (strain CLIB 122 / E 150)</name>
    <name type="common">Yeast</name>
    <name type="synonym">Candida lipolytica</name>
    <dbReference type="NCBI Taxonomy" id="284591"/>
    <lineage>
        <taxon>Eukaryota</taxon>
        <taxon>Fungi</taxon>
        <taxon>Dikarya</taxon>
        <taxon>Ascomycota</taxon>
        <taxon>Saccharomycotina</taxon>
        <taxon>Dipodascomycetes</taxon>
        <taxon>Dipodascales</taxon>
        <taxon>Dipodascales incertae sedis</taxon>
        <taxon>Yarrowia</taxon>
    </lineage>
</organism>
<gene>
    <name type="primary">MCR1</name>
    <name type="ordered locus">YALI0D11330g</name>
</gene>
<dbReference type="EC" id="1.6.2.2"/>
<dbReference type="EMBL" id="CR382130">
    <property type="protein sequence ID" value="CAG80882.1"/>
    <property type="molecule type" value="Genomic_DNA"/>
</dbReference>
<dbReference type="RefSeq" id="XP_502694.1">
    <property type="nucleotide sequence ID" value="XM_502694.1"/>
</dbReference>
<dbReference type="SMR" id="Q6C9G8"/>
<dbReference type="FunCoup" id="Q6C9G8">
    <property type="interactions" value="344"/>
</dbReference>
<dbReference type="STRING" id="284591.Q6C9G8"/>
<dbReference type="EnsemblFungi" id="CAG80882">
    <property type="protein sequence ID" value="CAG80882"/>
    <property type="gene ID" value="YALI0_D11330g"/>
</dbReference>
<dbReference type="VEuPathDB" id="FungiDB:YALI0_D11330g"/>
<dbReference type="HOGENOM" id="CLU_003827_9_1_1"/>
<dbReference type="InParanoid" id="Q6C9G8"/>
<dbReference type="OMA" id="KGPEMQK"/>
<dbReference type="OrthoDB" id="112055at4891"/>
<dbReference type="Proteomes" id="UP000001300">
    <property type="component" value="Chromosome D"/>
</dbReference>
<dbReference type="GO" id="GO:0005758">
    <property type="term" value="C:mitochondrial intermembrane space"/>
    <property type="evidence" value="ECO:0007669"/>
    <property type="project" value="EnsemblFungi"/>
</dbReference>
<dbReference type="GO" id="GO:0005741">
    <property type="term" value="C:mitochondrial outer membrane"/>
    <property type="evidence" value="ECO:0007669"/>
    <property type="project" value="UniProtKB-SubCell"/>
</dbReference>
<dbReference type="GO" id="GO:0004128">
    <property type="term" value="F:cytochrome-b5 reductase activity, acting on NAD(P)H"/>
    <property type="evidence" value="ECO:0000318"/>
    <property type="project" value="GO_Central"/>
</dbReference>
<dbReference type="GO" id="GO:0003954">
    <property type="term" value="F:NADH dehydrogenase activity"/>
    <property type="evidence" value="ECO:0007669"/>
    <property type="project" value="EnsemblFungi"/>
</dbReference>
<dbReference type="GO" id="GO:0034599">
    <property type="term" value="P:cellular response to oxidative stress"/>
    <property type="evidence" value="ECO:0007669"/>
    <property type="project" value="EnsemblFungi"/>
</dbReference>
<dbReference type="GO" id="GO:0006696">
    <property type="term" value="P:ergosterol biosynthetic process"/>
    <property type="evidence" value="ECO:0000318"/>
    <property type="project" value="GO_Central"/>
</dbReference>
<dbReference type="CDD" id="cd06183">
    <property type="entry name" value="cyt_b5_reduct_like"/>
    <property type="match status" value="1"/>
</dbReference>
<dbReference type="FunFam" id="2.40.30.10:FF:000032">
    <property type="entry name" value="NADH-cytochrome b5 reductase"/>
    <property type="match status" value="1"/>
</dbReference>
<dbReference type="FunFam" id="3.40.50.80:FF:000009">
    <property type="entry name" value="NADH-cytochrome b5 reductase"/>
    <property type="match status" value="1"/>
</dbReference>
<dbReference type="Gene3D" id="3.40.50.80">
    <property type="entry name" value="Nucleotide-binding domain of ferredoxin-NADP reductase (FNR) module"/>
    <property type="match status" value="1"/>
</dbReference>
<dbReference type="Gene3D" id="2.40.30.10">
    <property type="entry name" value="Translation factors"/>
    <property type="match status" value="1"/>
</dbReference>
<dbReference type="InterPro" id="IPR001834">
    <property type="entry name" value="CBR-like"/>
</dbReference>
<dbReference type="InterPro" id="IPR008333">
    <property type="entry name" value="Cbr1-like_FAD-bd_dom"/>
</dbReference>
<dbReference type="InterPro" id="IPR017927">
    <property type="entry name" value="FAD-bd_FR_type"/>
</dbReference>
<dbReference type="InterPro" id="IPR001709">
    <property type="entry name" value="Flavoprot_Pyr_Nucl_cyt_Rdtase"/>
</dbReference>
<dbReference type="InterPro" id="IPR039261">
    <property type="entry name" value="FNR_nucleotide-bd"/>
</dbReference>
<dbReference type="InterPro" id="IPR001433">
    <property type="entry name" value="OxRdtase_FAD/NAD-bd"/>
</dbReference>
<dbReference type="InterPro" id="IPR017938">
    <property type="entry name" value="Riboflavin_synthase-like_b-brl"/>
</dbReference>
<dbReference type="PANTHER" id="PTHR19370">
    <property type="entry name" value="NADH-CYTOCHROME B5 REDUCTASE"/>
    <property type="match status" value="1"/>
</dbReference>
<dbReference type="PANTHER" id="PTHR19370:SF171">
    <property type="entry name" value="NADH-CYTOCHROME B5 REDUCTASE 2"/>
    <property type="match status" value="1"/>
</dbReference>
<dbReference type="Pfam" id="PF00970">
    <property type="entry name" value="FAD_binding_6"/>
    <property type="match status" value="1"/>
</dbReference>
<dbReference type="Pfam" id="PF00175">
    <property type="entry name" value="NAD_binding_1"/>
    <property type="match status" value="1"/>
</dbReference>
<dbReference type="PRINTS" id="PR00406">
    <property type="entry name" value="CYTB5RDTASE"/>
</dbReference>
<dbReference type="PRINTS" id="PR00371">
    <property type="entry name" value="FPNCR"/>
</dbReference>
<dbReference type="SUPFAM" id="SSF52343">
    <property type="entry name" value="Ferredoxin reductase-like, C-terminal NADP-linked domain"/>
    <property type="match status" value="1"/>
</dbReference>
<dbReference type="SUPFAM" id="SSF63380">
    <property type="entry name" value="Riboflavin synthase domain-like"/>
    <property type="match status" value="1"/>
</dbReference>
<dbReference type="PROSITE" id="PS51384">
    <property type="entry name" value="FAD_FR"/>
    <property type="match status" value="1"/>
</dbReference>
<evidence type="ECO:0000250" key="1"/>
<evidence type="ECO:0000255" key="2"/>
<evidence type="ECO:0000255" key="3">
    <source>
        <dbReference type="PROSITE-ProRule" id="PRU00716"/>
    </source>
</evidence>
<evidence type="ECO:0000305" key="4"/>
<accession>Q6C9G8</accession>
<protein>
    <recommendedName>
        <fullName>NADH-cytochrome b5 reductase 2</fullName>
        <ecNumber>1.6.2.2</ecNumber>
    </recommendedName>
    <alternativeName>
        <fullName>Mitochondrial cytochrome b reductase</fullName>
    </alternativeName>
</protein>
<name>MCR1_YARLI</name>
<feature type="chain" id="PRO_0000330194" description="NADH-cytochrome b5 reductase 2">
    <location>
        <begin position="1"/>
        <end position="291"/>
    </location>
</feature>
<feature type="transmembrane region" description="Helical" evidence="2">
    <location>
        <begin position="7"/>
        <end position="23"/>
    </location>
</feature>
<feature type="domain" description="FAD-binding FR-type" evidence="3">
    <location>
        <begin position="41"/>
        <end position="145"/>
    </location>
</feature>
<feature type="binding site" evidence="1">
    <location>
        <begin position="148"/>
        <end position="183"/>
    </location>
    <ligand>
        <name>FAD</name>
        <dbReference type="ChEBI" id="CHEBI:57692"/>
    </ligand>
</feature>
<sequence>MLVPWAPIAATSVVAAAASSYYFSNMAISNDAKTATLKGDDQWVDLKLKSSKDLSHNTKALIFELPTPDSTLGLTTASALLTKYVTPKGSNVVRPYTPVSDPDSKGEFELVVKSYPEGKMSKHIHELKEGDTLSFKGPIIKYQWQPNLHKEITLIGAGTGITPLYQLISAINKNPEDKTKVNLFYGNATEGDILLKDEIDAIAKAKPQQFNVHYFLDKPSDNWKGENGFISEEFIKGNSPAADSDNVKVFVCGPPPFYKAISGAKVSPTDQGEVDGALKNLGFNKDQVFKF</sequence>
<keyword id="KW-0274">FAD</keyword>
<keyword id="KW-0285">Flavoprotein</keyword>
<keyword id="KW-0472">Membrane</keyword>
<keyword id="KW-0496">Mitochondrion</keyword>
<keyword id="KW-1000">Mitochondrion outer membrane</keyword>
<keyword id="KW-0520">NAD</keyword>
<keyword id="KW-0560">Oxidoreductase</keyword>
<keyword id="KW-1185">Reference proteome</keyword>
<keyword id="KW-0812">Transmembrane</keyword>
<keyword id="KW-1133">Transmembrane helix</keyword>
<proteinExistence type="inferred from homology"/>